<sequence>MLDVKSQDISIPEAVVVLCTAPDEATAQDLAAKVLAEKLAACATLLPGATSLYYWEGKLEQEYEVQMILKTTVSHQQALIDCLKSHHPYQTPELLVLPVTHGDTDYLSWLNASLR</sequence>
<keyword id="KW-0002">3D-structure</keyword>
<keyword id="KW-0186">Copper</keyword>
<keyword id="KW-0963">Cytoplasm</keyword>
<keyword id="KW-0479">Metal-binding</keyword>
<keyword id="KW-1185">Reference proteome</keyword>
<dbReference type="EMBL" id="AE006468">
    <property type="protein sequence ID" value="AAL23147.1"/>
    <property type="molecule type" value="Genomic_DNA"/>
</dbReference>
<dbReference type="RefSeq" id="NP_463188.1">
    <property type="nucleotide sequence ID" value="NC_003197.2"/>
</dbReference>
<dbReference type="RefSeq" id="WP_000887832.1">
    <property type="nucleotide sequence ID" value="NC_003197.2"/>
</dbReference>
<dbReference type="PDB" id="3OPK">
    <property type="method" value="X-ray"/>
    <property type="resolution" value="1.90 A"/>
    <property type="chains" value="A/B/C=1-115"/>
</dbReference>
<dbReference type="PDBsum" id="3OPK"/>
<dbReference type="SMR" id="Q7CPA2"/>
<dbReference type="STRING" id="99287.STM4324"/>
<dbReference type="PaxDb" id="99287-STM4324"/>
<dbReference type="GeneID" id="1255850"/>
<dbReference type="GeneID" id="66758552"/>
<dbReference type="KEGG" id="stm:STM4324"/>
<dbReference type="PATRIC" id="fig|99287.12.peg.4549"/>
<dbReference type="HOGENOM" id="CLU_098807_3_0_6"/>
<dbReference type="OMA" id="VYTTFPD"/>
<dbReference type="PhylomeDB" id="Q7CPA2"/>
<dbReference type="BioCyc" id="SENT99287:STM4324-MONOMER"/>
<dbReference type="EvolutionaryTrace" id="Q7CPA2"/>
<dbReference type="Proteomes" id="UP000001014">
    <property type="component" value="Chromosome"/>
</dbReference>
<dbReference type="GO" id="GO:0005737">
    <property type="term" value="C:cytoplasm"/>
    <property type="evidence" value="ECO:0007669"/>
    <property type="project" value="UniProtKB-SubCell"/>
</dbReference>
<dbReference type="GO" id="GO:0005507">
    <property type="term" value="F:copper ion binding"/>
    <property type="evidence" value="ECO:0000318"/>
    <property type="project" value="GO_Central"/>
</dbReference>
<dbReference type="GO" id="GO:0010038">
    <property type="term" value="P:response to metal ion"/>
    <property type="evidence" value="ECO:0007669"/>
    <property type="project" value="InterPro"/>
</dbReference>
<dbReference type="FunFam" id="3.30.70.120:FF:000004">
    <property type="entry name" value="Divalent-cation tolerance protein CutA"/>
    <property type="match status" value="1"/>
</dbReference>
<dbReference type="Gene3D" id="3.30.70.120">
    <property type="match status" value="1"/>
</dbReference>
<dbReference type="HAMAP" id="MF_01160">
    <property type="entry name" value="CutA"/>
    <property type="match status" value="1"/>
</dbReference>
<dbReference type="InterPro" id="IPR023700">
    <property type="entry name" value="CutA_Enterobact"/>
</dbReference>
<dbReference type="InterPro" id="IPR004323">
    <property type="entry name" value="Ion_tolerance_CutA"/>
</dbReference>
<dbReference type="InterPro" id="IPR011322">
    <property type="entry name" value="N-reg_PII-like_a/b"/>
</dbReference>
<dbReference type="InterPro" id="IPR015867">
    <property type="entry name" value="N-reg_PII/ATP_PRibTrfase_C"/>
</dbReference>
<dbReference type="NCBIfam" id="NF007930">
    <property type="entry name" value="PRK10645.1"/>
    <property type="match status" value="1"/>
</dbReference>
<dbReference type="PANTHER" id="PTHR23419">
    <property type="entry name" value="DIVALENT CATION TOLERANCE CUTA-RELATED"/>
    <property type="match status" value="1"/>
</dbReference>
<dbReference type="PANTHER" id="PTHR23419:SF8">
    <property type="entry name" value="FI09726P"/>
    <property type="match status" value="1"/>
</dbReference>
<dbReference type="Pfam" id="PF03091">
    <property type="entry name" value="CutA1"/>
    <property type="match status" value="1"/>
</dbReference>
<dbReference type="SUPFAM" id="SSF54913">
    <property type="entry name" value="GlnB-like"/>
    <property type="match status" value="1"/>
</dbReference>
<gene>
    <name evidence="1" type="primary">cutA</name>
    <name type="ordered locus">STM4324</name>
</gene>
<evidence type="ECO:0000255" key="1">
    <source>
        <dbReference type="HAMAP-Rule" id="MF_01160"/>
    </source>
</evidence>
<evidence type="ECO:0007829" key="2">
    <source>
        <dbReference type="PDB" id="3OPK"/>
    </source>
</evidence>
<comment type="function">
    <text evidence="1">Involved in resistance toward heavy metals.</text>
</comment>
<comment type="cofactor">
    <cofactor evidence="1">
        <name>Cu cation</name>
        <dbReference type="ChEBI" id="CHEBI:23378"/>
    </cofactor>
    <text evidence="1">Binds 1 copper ion per subunit.</text>
</comment>
<comment type="subunit">
    <text evidence="1">Homotrimer.</text>
</comment>
<comment type="subcellular location">
    <subcellularLocation>
        <location evidence="1">Cytoplasm</location>
    </subcellularLocation>
</comment>
<comment type="similarity">
    <text evidence="1">Belongs to the CutA family.</text>
</comment>
<feature type="chain" id="PRO_0000157124" description="Divalent-cation tolerance protein CutA">
    <location>
        <begin position="1"/>
        <end position="115"/>
    </location>
</feature>
<feature type="binding site" evidence="1">
    <location>
        <position position="19"/>
    </location>
    <ligand>
        <name>Cu cation</name>
        <dbReference type="ChEBI" id="CHEBI:23378"/>
    </ligand>
</feature>
<feature type="binding site" evidence="1">
    <location>
        <position position="86"/>
    </location>
    <ligand>
        <name>Cu cation</name>
        <dbReference type="ChEBI" id="CHEBI:23378"/>
    </ligand>
</feature>
<feature type="binding site" evidence="1">
    <location>
        <position position="87"/>
    </location>
    <ligand>
        <name>Cu cation</name>
        <dbReference type="ChEBI" id="CHEBI:23378"/>
    </ligand>
</feature>
<feature type="helix" evidence="2">
    <location>
        <begin position="5"/>
        <end position="7"/>
    </location>
</feature>
<feature type="strand" evidence="2">
    <location>
        <begin position="14"/>
        <end position="23"/>
    </location>
</feature>
<feature type="helix" evidence="2">
    <location>
        <begin position="24"/>
        <end position="36"/>
    </location>
</feature>
<feature type="strand" evidence="2">
    <location>
        <begin position="41"/>
        <end position="55"/>
    </location>
</feature>
<feature type="strand" evidence="2">
    <location>
        <begin position="58"/>
        <end position="72"/>
    </location>
</feature>
<feature type="helix" evidence="2">
    <location>
        <begin position="73"/>
        <end position="75"/>
    </location>
</feature>
<feature type="helix" evidence="2">
    <location>
        <begin position="76"/>
        <end position="86"/>
    </location>
</feature>
<feature type="strand" evidence="2">
    <location>
        <begin position="87"/>
        <end position="91"/>
    </location>
</feature>
<feature type="strand" evidence="2">
    <location>
        <begin position="94"/>
        <end position="98"/>
    </location>
</feature>
<feature type="helix" evidence="2">
    <location>
        <begin position="104"/>
        <end position="112"/>
    </location>
</feature>
<organism>
    <name type="scientific">Salmonella typhimurium (strain LT2 / SGSC1412 / ATCC 700720)</name>
    <dbReference type="NCBI Taxonomy" id="99287"/>
    <lineage>
        <taxon>Bacteria</taxon>
        <taxon>Pseudomonadati</taxon>
        <taxon>Pseudomonadota</taxon>
        <taxon>Gammaproteobacteria</taxon>
        <taxon>Enterobacterales</taxon>
        <taxon>Enterobacteriaceae</taxon>
        <taxon>Salmonella</taxon>
    </lineage>
</organism>
<reference key="1">
    <citation type="journal article" date="2001" name="Nature">
        <title>Complete genome sequence of Salmonella enterica serovar Typhimurium LT2.</title>
        <authorList>
            <person name="McClelland M."/>
            <person name="Sanderson K.E."/>
            <person name="Spieth J."/>
            <person name="Clifton S.W."/>
            <person name="Latreille P."/>
            <person name="Courtney L."/>
            <person name="Porwollik S."/>
            <person name="Ali J."/>
            <person name="Dante M."/>
            <person name="Du F."/>
            <person name="Hou S."/>
            <person name="Layman D."/>
            <person name="Leonard S."/>
            <person name="Nguyen C."/>
            <person name="Scott K."/>
            <person name="Holmes A."/>
            <person name="Grewal N."/>
            <person name="Mulvaney E."/>
            <person name="Ryan E."/>
            <person name="Sun H."/>
            <person name="Florea L."/>
            <person name="Miller W."/>
            <person name="Stoneking T."/>
            <person name="Nhan M."/>
            <person name="Waterston R."/>
            <person name="Wilson R.K."/>
        </authorList>
    </citation>
    <scope>NUCLEOTIDE SEQUENCE [LARGE SCALE GENOMIC DNA]</scope>
    <source>
        <strain>LT2 / SGSC1412 / ATCC 700720</strain>
    </source>
</reference>
<name>CUTA_SALTY</name>
<accession>Q7CPA2</accession>
<proteinExistence type="evidence at protein level"/>
<protein>
    <recommendedName>
        <fullName evidence="1">Divalent-cation tolerance protein CutA</fullName>
    </recommendedName>
</protein>